<gene>
    <name type="ORF">DDB_G0286175</name>
</gene>
<reference key="1">
    <citation type="journal article" date="2005" name="Nature">
        <title>The genome of the social amoeba Dictyostelium discoideum.</title>
        <authorList>
            <person name="Eichinger L."/>
            <person name="Pachebat J.A."/>
            <person name="Gloeckner G."/>
            <person name="Rajandream M.A."/>
            <person name="Sucgang R."/>
            <person name="Berriman M."/>
            <person name="Song J."/>
            <person name="Olsen R."/>
            <person name="Szafranski K."/>
            <person name="Xu Q."/>
            <person name="Tunggal B."/>
            <person name="Kummerfeld S."/>
            <person name="Madera M."/>
            <person name="Konfortov B.A."/>
            <person name="Rivero F."/>
            <person name="Bankier A.T."/>
            <person name="Lehmann R."/>
            <person name="Hamlin N."/>
            <person name="Davies R."/>
            <person name="Gaudet P."/>
            <person name="Fey P."/>
            <person name="Pilcher K."/>
            <person name="Chen G."/>
            <person name="Saunders D."/>
            <person name="Sodergren E.J."/>
            <person name="Davis P."/>
            <person name="Kerhornou A."/>
            <person name="Nie X."/>
            <person name="Hall N."/>
            <person name="Anjard C."/>
            <person name="Hemphill L."/>
            <person name="Bason N."/>
            <person name="Farbrother P."/>
            <person name="Desany B."/>
            <person name="Just E."/>
            <person name="Morio T."/>
            <person name="Rost R."/>
            <person name="Churcher C.M."/>
            <person name="Cooper J."/>
            <person name="Haydock S."/>
            <person name="van Driessche N."/>
            <person name="Cronin A."/>
            <person name="Goodhead I."/>
            <person name="Muzny D.M."/>
            <person name="Mourier T."/>
            <person name="Pain A."/>
            <person name="Lu M."/>
            <person name="Harper D."/>
            <person name="Lindsay R."/>
            <person name="Hauser H."/>
            <person name="James K.D."/>
            <person name="Quiles M."/>
            <person name="Madan Babu M."/>
            <person name="Saito T."/>
            <person name="Buchrieser C."/>
            <person name="Wardroper A."/>
            <person name="Felder M."/>
            <person name="Thangavelu M."/>
            <person name="Johnson D."/>
            <person name="Knights A."/>
            <person name="Loulseged H."/>
            <person name="Mungall K.L."/>
            <person name="Oliver K."/>
            <person name="Price C."/>
            <person name="Quail M.A."/>
            <person name="Urushihara H."/>
            <person name="Hernandez J."/>
            <person name="Rabbinowitsch E."/>
            <person name="Steffen D."/>
            <person name="Sanders M."/>
            <person name="Ma J."/>
            <person name="Kohara Y."/>
            <person name="Sharp S."/>
            <person name="Simmonds M.N."/>
            <person name="Spiegler S."/>
            <person name="Tivey A."/>
            <person name="Sugano S."/>
            <person name="White B."/>
            <person name="Walker D."/>
            <person name="Woodward J.R."/>
            <person name="Winckler T."/>
            <person name="Tanaka Y."/>
            <person name="Shaulsky G."/>
            <person name="Schleicher M."/>
            <person name="Weinstock G.M."/>
            <person name="Rosenthal A."/>
            <person name="Cox E.C."/>
            <person name="Chisholm R.L."/>
            <person name="Gibbs R.A."/>
            <person name="Loomis W.F."/>
            <person name="Platzer M."/>
            <person name="Kay R.R."/>
            <person name="Williams J.G."/>
            <person name="Dear P.H."/>
            <person name="Noegel A.A."/>
            <person name="Barrell B.G."/>
            <person name="Kuspa A."/>
        </authorList>
    </citation>
    <scope>NUCLEOTIDE SEQUENCE [LARGE SCALE GENOMIC DNA]</scope>
    <source>
        <strain>AX4</strain>
    </source>
</reference>
<protein>
    <recommendedName>
        <fullName>Uncharacterized protein DDB_G0286175</fullName>
    </recommendedName>
</protein>
<evidence type="ECO:0000256" key="1">
    <source>
        <dbReference type="SAM" id="MobiDB-lite"/>
    </source>
</evidence>
<feature type="chain" id="PRO_0000348524" description="Uncharacterized protein DDB_G0286175">
    <location>
        <begin position="1"/>
        <end position="391"/>
    </location>
</feature>
<feature type="region of interest" description="Disordered" evidence="1">
    <location>
        <begin position="118"/>
        <end position="162"/>
    </location>
</feature>
<feature type="region of interest" description="Disordered" evidence="1">
    <location>
        <begin position="184"/>
        <end position="258"/>
    </location>
</feature>
<feature type="region of interest" description="Disordered" evidence="1">
    <location>
        <begin position="272"/>
        <end position="327"/>
    </location>
</feature>
<feature type="region of interest" description="Disordered" evidence="1">
    <location>
        <begin position="337"/>
        <end position="356"/>
    </location>
</feature>
<feature type="compositionally biased region" description="Low complexity" evidence="1">
    <location>
        <begin position="118"/>
        <end position="149"/>
    </location>
</feature>
<feature type="compositionally biased region" description="Basic residues" evidence="1">
    <location>
        <begin position="150"/>
        <end position="162"/>
    </location>
</feature>
<feature type="compositionally biased region" description="Low complexity" evidence="1">
    <location>
        <begin position="186"/>
        <end position="211"/>
    </location>
</feature>
<feature type="compositionally biased region" description="Polar residues" evidence="1">
    <location>
        <begin position="212"/>
        <end position="223"/>
    </location>
</feature>
<feature type="compositionally biased region" description="Low complexity" evidence="1">
    <location>
        <begin position="244"/>
        <end position="256"/>
    </location>
</feature>
<dbReference type="EMBL" id="AAFI02000085">
    <property type="protein sequence ID" value="EAL64380.1"/>
    <property type="molecule type" value="Genomic_DNA"/>
</dbReference>
<dbReference type="RefSeq" id="XP_637874.1">
    <property type="nucleotide sequence ID" value="XM_632782.1"/>
</dbReference>
<dbReference type="SMR" id="Q54M74"/>
<dbReference type="FunCoup" id="Q54M74">
    <property type="interactions" value="877"/>
</dbReference>
<dbReference type="PaxDb" id="44689-DDB0218793"/>
<dbReference type="EnsemblProtists" id="EAL64380">
    <property type="protein sequence ID" value="EAL64380"/>
    <property type="gene ID" value="DDB_G0286175"/>
</dbReference>
<dbReference type="GeneID" id="8625471"/>
<dbReference type="KEGG" id="ddi:DDB_G0286175"/>
<dbReference type="dictyBase" id="DDB_G0286175"/>
<dbReference type="VEuPathDB" id="AmoebaDB:DDB_G0286175"/>
<dbReference type="eggNOG" id="ENOG502RI5A">
    <property type="taxonomic scope" value="Eukaryota"/>
</dbReference>
<dbReference type="HOGENOM" id="CLU_706822_0_0_1"/>
<dbReference type="InParanoid" id="Q54M74"/>
<dbReference type="OMA" id="MLEWRIK"/>
<dbReference type="PRO" id="PR:Q54M74"/>
<dbReference type="Proteomes" id="UP000002195">
    <property type="component" value="Chromosome 4"/>
</dbReference>
<proteinExistence type="predicted"/>
<accession>Q54M74</accession>
<sequence>MYDVVDLTPTYSPTLKPMLSQQYQTVPPFIIPPNDPNSPSPLSSPSLLSLHQIQMHHQQQLQLLQQQQQQLQQQHQNQVVNQPIQPLQPQPSAFLLNHPNTITTPPLQPMMTPNTIISINSLPPTTTTTTTTTTTTTIPNNNNNITLSPQHHHGQQQHHQHPHLRVDISNNNNSVVDQLPQQQQTNVNNNNNNNNNNNNNNNSNNNNNNNNDFSTPNSFSVPTTPMVAPQMQFPQPPPPLSALNTPNNSTSNPTTPRNERDLLRRLAVANSNNNLNNNLNNLNNNNNNNNNNNNNNNNNNNNNSNNNNINNNNNINNNNNLNNNNLNNNNLPIIQPLNLNNNNNNNNNNNNNNNNNLINPFLNEAIDEQVVPKGSTSPLITSSKKRIKLNV</sequence>
<keyword id="KW-1185">Reference proteome</keyword>
<organism>
    <name type="scientific">Dictyostelium discoideum</name>
    <name type="common">Social amoeba</name>
    <dbReference type="NCBI Taxonomy" id="44689"/>
    <lineage>
        <taxon>Eukaryota</taxon>
        <taxon>Amoebozoa</taxon>
        <taxon>Evosea</taxon>
        <taxon>Eumycetozoa</taxon>
        <taxon>Dictyostelia</taxon>
        <taxon>Dictyosteliales</taxon>
        <taxon>Dictyosteliaceae</taxon>
        <taxon>Dictyostelium</taxon>
    </lineage>
</organism>
<name>Y8793_DICDI</name>